<keyword id="KW-0131">Cell cycle</keyword>
<keyword id="KW-0132">Cell division</keyword>
<keyword id="KW-0342">GTP-binding</keyword>
<keyword id="KW-0460">Magnesium</keyword>
<keyword id="KW-0479">Metal-binding</keyword>
<keyword id="KW-0547">Nucleotide-binding</keyword>
<keyword id="KW-0717">Septation</keyword>
<protein>
    <recommendedName>
        <fullName evidence="1">Probable GTP-binding protein EngB</fullName>
    </recommendedName>
</protein>
<name>ENGB_ECTM1</name>
<organism>
    <name type="scientific">Ectopseudomonas mendocina (strain ymp)</name>
    <name type="common">Pseudomonas mendocina</name>
    <dbReference type="NCBI Taxonomy" id="399739"/>
    <lineage>
        <taxon>Bacteria</taxon>
        <taxon>Pseudomonadati</taxon>
        <taxon>Pseudomonadota</taxon>
        <taxon>Gammaproteobacteria</taxon>
        <taxon>Pseudomonadales</taxon>
        <taxon>Pseudomonadaceae</taxon>
        <taxon>Ectopseudomonas</taxon>
    </lineage>
</organism>
<sequence length="216" mass="23971">MLPKNPIIGLCQQASFLISAAKVDQCPEDSGLEVAFAGRSNAGKSSALNTLTHASLARTSKTPGRTQLLNFFRLDDERRLVDLPGYGYAKVPIPLKQHWQKHLEAYLGSRESLCGLVLMMDIRHPLTEFDRMMLDWSVASGMPLHILLTKADKLAFGAAKNALLKVRQEIRKQWGEGISIQLFSAPKRMGVEEAQMVLAGWLDLLPQEDEESAEEA</sequence>
<accession>A4XNL3</accession>
<dbReference type="EMBL" id="CP000680">
    <property type="protein sequence ID" value="ABP82929.1"/>
    <property type="molecule type" value="Genomic_DNA"/>
</dbReference>
<dbReference type="SMR" id="A4XNL3"/>
<dbReference type="STRING" id="399739.Pmen_0155"/>
<dbReference type="KEGG" id="pmy:Pmen_0155"/>
<dbReference type="PATRIC" id="fig|399739.8.peg.156"/>
<dbReference type="eggNOG" id="COG0218">
    <property type="taxonomic scope" value="Bacteria"/>
</dbReference>
<dbReference type="HOGENOM" id="CLU_033732_1_0_6"/>
<dbReference type="OrthoDB" id="9804921at2"/>
<dbReference type="GO" id="GO:0005829">
    <property type="term" value="C:cytosol"/>
    <property type="evidence" value="ECO:0007669"/>
    <property type="project" value="TreeGrafter"/>
</dbReference>
<dbReference type="GO" id="GO:0005525">
    <property type="term" value="F:GTP binding"/>
    <property type="evidence" value="ECO:0007669"/>
    <property type="project" value="UniProtKB-UniRule"/>
</dbReference>
<dbReference type="GO" id="GO:0046872">
    <property type="term" value="F:metal ion binding"/>
    <property type="evidence" value="ECO:0007669"/>
    <property type="project" value="UniProtKB-KW"/>
</dbReference>
<dbReference type="GO" id="GO:0000917">
    <property type="term" value="P:division septum assembly"/>
    <property type="evidence" value="ECO:0007669"/>
    <property type="project" value="UniProtKB-KW"/>
</dbReference>
<dbReference type="CDD" id="cd01876">
    <property type="entry name" value="YihA_EngB"/>
    <property type="match status" value="1"/>
</dbReference>
<dbReference type="FunFam" id="3.40.50.300:FF:000098">
    <property type="entry name" value="Probable GTP-binding protein EngB"/>
    <property type="match status" value="1"/>
</dbReference>
<dbReference type="Gene3D" id="3.40.50.300">
    <property type="entry name" value="P-loop containing nucleotide triphosphate hydrolases"/>
    <property type="match status" value="1"/>
</dbReference>
<dbReference type="HAMAP" id="MF_00321">
    <property type="entry name" value="GTPase_EngB"/>
    <property type="match status" value="1"/>
</dbReference>
<dbReference type="InterPro" id="IPR030393">
    <property type="entry name" value="G_ENGB_dom"/>
</dbReference>
<dbReference type="InterPro" id="IPR006073">
    <property type="entry name" value="GTP-bd"/>
</dbReference>
<dbReference type="InterPro" id="IPR019987">
    <property type="entry name" value="GTP-bd_ribosome_bio_YsxC"/>
</dbReference>
<dbReference type="InterPro" id="IPR027417">
    <property type="entry name" value="P-loop_NTPase"/>
</dbReference>
<dbReference type="NCBIfam" id="TIGR03598">
    <property type="entry name" value="GTPase_YsxC"/>
    <property type="match status" value="1"/>
</dbReference>
<dbReference type="PANTHER" id="PTHR11649:SF13">
    <property type="entry name" value="ENGB-TYPE G DOMAIN-CONTAINING PROTEIN"/>
    <property type="match status" value="1"/>
</dbReference>
<dbReference type="PANTHER" id="PTHR11649">
    <property type="entry name" value="MSS1/TRME-RELATED GTP-BINDING PROTEIN"/>
    <property type="match status" value="1"/>
</dbReference>
<dbReference type="Pfam" id="PF01926">
    <property type="entry name" value="MMR_HSR1"/>
    <property type="match status" value="1"/>
</dbReference>
<dbReference type="SUPFAM" id="SSF52540">
    <property type="entry name" value="P-loop containing nucleoside triphosphate hydrolases"/>
    <property type="match status" value="1"/>
</dbReference>
<dbReference type="PROSITE" id="PS51706">
    <property type="entry name" value="G_ENGB"/>
    <property type="match status" value="1"/>
</dbReference>
<reference key="1">
    <citation type="submission" date="2007-04" db="EMBL/GenBank/DDBJ databases">
        <title>Complete sequence of Pseudomonas mendocina ymp.</title>
        <authorList>
            <consortium name="US DOE Joint Genome Institute"/>
            <person name="Copeland A."/>
            <person name="Lucas S."/>
            <person name="Lapidus A."/>
            <person name="Barry K."/>
            <person name="Glavina del Rio T."/>
            <person name="Dalin E."/>
            <person name="Tice H."/>
            <person name="Pitluck S."/>
            <person name="Kiss H."/>
            <person name="Brettin T."/>
            <person name="Detter J.C."/>
            <person name="Bruce D."/>
            <person name="Han C."/>
            <person name="Schmutz J."/>
            <person name="Larimer F."/>
            <person name="Land M."/>
            <person name="Hauser L."/>
            <person name="Kyrpides N."/>
            <person name="Mikhailova N."/>
            <person name="Hersman L."/>
            <person name="Dubois J."/>
            <person name="Maurice P."/>
            <person name="Richardson P."/>
        </authorList>
    </citation>
    <scope>NUCLEOTIDE SEQUENCE [LARGE SCALE GENOMIC DNA]</scope>
    <source>
        <strain>ymp</strain>
    </source>
</reference>
<comment type="function">
    <text evidence="1">Necessary for normal cell division and for the maintenance of normal septation.</text>
</comment>
<comment type="cofactor">
    <cofactor evidence="1">
        <name>Mg(2+)</name>
        <dbReference type="ChEBI" id="CHEBI:18420"/>
    </cofactor>
</comment>
<comment type="similarity">
    <text evidence="1">Belongs to the TRAFAC class TrmE-Era-EngA-EngB-Septin-like GTPase superfamily. EngB GTPase family.</text>
</comment>
<evidence type="ECO:0000255" key="1">
    <source>
        <dbReference type="HAMAP-Rule" id="MF_00321"/>
    </source>
</evidence>
<feature type="chain" id="PRO_1000005842" description="Probable GTP-binding protein EngB">
    <location>
        <begin position="1"/>
        <end position="216"/>
    </location>
</feature>
<feature type="domain" description="EngB-type G" evidence="1">
    <location>
        <begin position="30"/>
        <end position="204"/>
    </location>
</feature>
<feature type="binding site" evidence="1">
    <location>
        <begin position="38"/>
        <end position="45"/>
    </location>
    <ligand>
        <name>GTP</name>
        <dbReference type="ChEBI" id="CHEBI:37565"/>
    </ligand>
</feature>
<feature type="binding site" evidence="1">
    <location>
        <position position="45"/>
    </location>
    <ligand>
        <name>Mg(2+)</name>
        <dbReference type="ChEBI" id="CHEBI:18420"/>
    </ligand>
</feature>
<feature type="binding site" evidence="1">
    <location>
        <begin position="64"/>
        <end position="68"/>
    </location>
    <ligand>
        <name>GTP</name>
        <dbReference type="ChEBI" id="CHEBI:37565"/>
    </ligand>
</feature>
<feature type="binding site" evidence="1">
    <location>
        <position position="66"/>
    </location>
    <ligand>
        <name>Mg(2+)</name>
        <dbReference type="ChEBI" id="CHEBI:18420"/>
    </ligand>
</feature>
<feature type="binding site" evidence="1">
    <location>
        <begin position="82"/>
        <end position="85"/>
    </location>
    <ligand>
        <name>GTP</name>
        <dbReference type="ChEBI" id="CHEBI:37565"/>
    </ligand>
</feature>
<feature type="binding site" evidence="1">
    <location>
        <begin position="149"/>
        <end position="152"/>
    </location>
    <ligand>
        <name>GTP</name>
        <dbReference type="ChEBI" id="CHEBI:37565"/>
    </ligand>
</feature>
<feature type="binding site" evidence="1">
    <location>
        <begin position="182"/>
        <end position="185"/>
    </location>
    <ligand>
        <name>GTP</name>
        <dbReference type="ChEBI" id="CHEBI:37565"/>
    </ligand>
</feature>
<proteinExistence type="inferred from homology"/>
<gene>
    <name evidence="1" type="primary">engB</name>
    <name type="ordered locus">Pmen_0155</name>
</gene>